<accession>Q9QY10</accession>
<gene>
    <name type="primary">Fgfbp1</name>
</gene>
<dbReference type="EMBL" id="AF142758">
    <property type="protein sequence ID" value="AAF23079.1"/>
    <property type="molecule type" value="mRNA"/>
</dbReference>
<dbReference type="RefSeq" id="NP_072125.1">
    <property type="nucleotide sequence ID" value="NM_022603.1"/>
</dbReference>
<dbReference type="SMR" id="Q9QY10"/>
<dbReference type="FunCoup" id="Q9QY10">
    <property type="interactions" value="7"/>
</dbReference>
<dbReference type="STRING" id="10116.ENSRNOP00000004128"/>
<dbReference type="GlyCosmos" id="Q9QY10">
    <property type="glycosylation" value="1 site, No reported glycans"/>
</dbReference>
<dbReference type="GlyGen" id="Q9QY10">
    <property type="glycosylation" value="1 site"/>
</dbReference>
<dbReference type="PhosphoSitePlus" id="Q9QY10"/>
<dbReference type="PaxDb" id="10116-ENSRNOP00000004128"/>
<dbReference type="GeneID" id="64535"/>
<dbReference type="KEGG" id="rno:64535"/>
<dbReference type="AGR" id="RGD:621211"/>
<dbReference type="CTD" id="9982"/>
<dbReference type="RGD" id="621211">
    <property type="gene designation" value="Fgfbp1"/>
</dbReference>
<dbReference type="eggNOG" id="ENOG502RZQ6">
    <property type="taxonomic scope" value="Eukaryota"/>
</dbReference>
<dbReference type="InParanoid" id="Q9QY10"/>
<dbReference type="PhylomeDB" id="Q9QY10"/>
<dbReference type="Reactome" id="R-RNO-190377">
    <property type="pathway name" value="FGFR2b ligand binding and activation"/>
</dbReference>
<dbReference type="PRO" id="PR:Q9QY10"/>
<dbReference type="Proteomes" id="UP000002494">
    <property type="component" value="Unplaced"/>
</dbReference>
<dbReference type="GO" id="GO:0009986">
    <property type="term" value="C:cell surface"/>
    <property type="evidence" value="ECO:0000266"/>
    <property type="project" value="RGD"/>
</dbReference>
<dbReference type="GO" id="GO:0005576">
    <property type="term" value="C:extracellular region"/>
    <property type="evidence" value="ECO:0000266"/>
    <property type="project" value="RGD"/>
</dbReference>
<dbReference type="GO" id="GO:0005886">
    <property type="term" value="C:plasma membrane"/>
    <property type="evidence" value="ECO:0007669"/>
    <property type="project" value="UniProtKB-SubCell"/>
</dbReference>
<dbReference type="GO" id="GO:0017134">
    <property type="term" value="F:fibroblast growth factor binding"/>
    <property type="evidence" value="ECO:0000266"/>
    <property type="project" value="RGD"/>
</dbReference>
<dbReference type="GO" id="GO:0019838">
    <property type="term" value="F:growth factor binding"/>
    <property type="evidence" value="ECO:0000318"/>
    <property type="project" value="GO_Central"/>
</dbReference>
<dbReference type="GO" id="GO:0007267">
    <property type="term" value="P:cell-cell signaling"/>
    <property type="evidence" value="ECO:0000314"/>
    <property type="project" value="RGD"/>
</dbReference>
<dbReference type="GO" id="GO:0008543">
    <property type="term" value="P:fibroblast growth factor receptor signaling pathway"/>
    <property type="evidence" value="ECO:0000266"/>
    <property type="project" value="RGD"/>
</dbReference>
<dbReference type="GO" id="GO:0051450">
    <property type="term" value="P:myoblast proliferation"/>
    <property type="evidence" value="ECO:0000266"/>
    <property type="project" value="RGD"/>
</dbReference>
<dbReference type="GO" id="GO:1903589">
    <property type="term" value="P:positive regulation of blood vessel endothelial cell proliferation involved in sprouting angiogenesis"/>
    <property type="evidence" value="ECO:0000266"/>
    <property type="project" value="RGD"/>
</dbReference>
<dbReference type="GO" id="GO:0090050">
    <property type="term" value="P:positive regulation of cell migration involved in sprouting angiogenesis"/>
    <property type="evidence" value="ECO:0000266"/>
    <property type="project" value="RGD"/>
</dbReference>
<dbReference type="GO" id="GO:0045743">
    <property type="term" value="P:positive regulation of fibroblast growth factor receptor signaling pathway"/>
    <property type="evidence" value="ECO:0000266"/>
    <property type="project" value="RGD"/>
</dbReference>
<dbReference type="GO" id="GO:2000288">
    <property type="term" value="P:positive regulation of myoblast proliferation"/>
    <property type="evidence" value="ECO:0000266"/>
    <property type="project" value="RGD"/>
</dbReference>
<dbReference type="InterPro" id="IPR010510">
    <property type="entry name" value="FGF1-bd"/>
</dbReference>
<dbReference type="PANTHER" id="PTHR15258">
    <property type="entry name" value="FGF BINDING PROTEIN-RELATED"/>
    <property type="match status" value="1"/>
</dbReference>
<dbReference type="PANTHER" id="PTHR15258:SF2">
    <property type="entry name" value="FIBROBLAST GROWTH FACTOR-BINDING PROTEIN 1"/>
    <property type="match status" value="1"/>
</dbReference>
<dbReference type="Pfam" id="PF06473">
    <property type="entry name" value="FGF-BP1"/>
    <property type="match status" value="1"/>
</dbReference>
<evidence type="ECO:0000250" key="1"/>
<evidence type="ECO:0000250" key="2">
    <source>
        <dbReference type="UniProtKB" id="Q14512"/>
    </source>
</evidence>
<evidence type="ECO:0000255" key="3"/>
<evidence type="ECO:0000256" key="4">
    <source>
        <dbReference type="SAM" id="MobiDB-lite"/>
    </source>
</evidence>
<evidence type="ECO:0000269" key="5">
    <source>
    </source>
</evidence>
<evidence type="ECO:0000305" key="6"/>
<organism>
    <name type="scientific">Rattus norvegicus</name>
    <name type="common">Rat</name>
    <dbReference type="NCBI Taxonomy" id="10116"/>
    <lineage>
        <taxon>Eukaryota</taxon>
        <taxon>Metazoa</taxon>
        <taxon>Chordata</taxon>
        <taxon>Craniata</taxon>
        <taxon>Vertebrata</taxon>
        <taxon>Euteleostomi</taxon>
        <taxon>Mammalia</taxon>
        <taxon>Eutheria</taxon>
        <taxon>Euarchontoglires</taxon>
        <taxon>Glires</taxon>
        <taxon>Rodentia</taxon>
        <taxon>Myomorpha</taxon>
        <taxon>Muroidea</taxon>
        <taxon>Muridae</taxon>
        <taxon>Murinae</taxon>
        <taxon>Rattus</taxon>
    </lineage>
</organism>
<proteinExistence type="evidence at protein level"/>
<protein>
    <recommendedName>
        <fullName>Fibroblast growth factor-binding protein 1</fullName>
        <shortName>FGF-BP</shortName>
        <shortName>FGF-BP1</shortName>
        <shortName>FGF-binding protein 1</shortName>
        <shortName>FGFBP-1</shortName>
        <shortName>Growth factor-binding protein 1</shortName>
    </recommendedName>
</protein>
<sequence length="238" mass="26887">MRIHGLILLSFLLLAAQVLSEKVRKTAKNVPDSTTEEDMSPSLGKARNKQRSRTSKSMTHGRFVTKDQATCRWAVTEEELGINLKVQCTRADQEFSCVFAGDPTGCLKYDKDQTYWKQVARTLRKQKNICENSKSVLKTRVCRKKFPESNLKVVNPRKEKAEVSPREHNKVQEAVSMEPNKVKVDITTSPAATVAVKDSECLEDPDVLTQRKTALEFCGESWSSFCTFFLNMLQATSC</sequence>
<name>FGFP1_RAT</name>
<comment type="function">
    <text evidence="1">Acts as a carrier protein that release fibroblast-binding factors (FGFs) from the extracellular matrix (EM) storage and thus enhance the mitogenic activity of FGFs. Enhances FGF2 signaling during tissue repair, angiogenesis and in tumor growth (By similarity).</text>
</comment>
<comment type="subunit">
    <text evidence="1">Found in a complex with FGFBP1, FGF1 and FGF2. Interacts with FGF1, FGF2, FGF7, FGF10, FGF22 and HSPG2 (By similarity).</text>
</comment>
<comment type="subcellular location">
    <subcellularLocation>
        <location evidence="2">Secreted</location>
        <location evidence="2">Extracellular space</location>
    </subcellularLocation>
    <subcellularLocation>
        <location evidence="2">Cell membrane</location>
        <topology evidence="2">Peripheral membrane protein</topology>
    </subcellularLocation>
    <text evidence="2">Extracellular and plasma membrane-associated.</text>
</comment>
<comment type="tissue specificity">
    <text evidence="5">Expressed in gut, eye, thymus, skin, lung, tongue, Purkinje cells and cerebral chorioid plexus (at protein level).</text>
</comment>
<comment type="induction">
    <text evidence="5">Down-regulated by retinoids.</text>
</comment>
<comment type="similarity">
    <text evidence="6">Belongs to the fibroblast growth factor-binding protein family.</text>
</comment>
<keyword id="KW-1003">Cell membrane</keyword>
<keyword id="KW-1015">Disulfide bond</keyword>
<keyword id="KW-0325">Glycoprotein</keyword>
<keyword id="KW-0340">Growth factor binding</keyword>
<keyword id="KW-0472">Membrane</keyword>
<keyword id="KW-1185">Reference proteome</keyword>
<keyword id="KW-0964">Secreted</keyword>
<keyword id="KW-0732">Signal</keyword>
<feature type="signal peptide" evidence="3">
    <location>
        <begin position="1"/>
        <end position="20"/>
    </location>
</feature>
<feature type="chain" id="PRO_0000245514" description="Fibroblast growth factor-binding protein 1">
    <location>
        <begin position="21"/>
        <end position="238"/>
    </location>
</feature>
<feature type="region of interest" description="Disordered" evidence="4">
    <location>
        <begin position="25"/>
        <end position="61"/>
    </location>
</feature>
<feature type="region of interest" description="Sufficient for interaction with FGF2 and FGF2-induced effects" evidence="1">
    <location>
        <begin position="197"/>
        <end position="238"/>
    </location>
</feature>
<feature type="glycosylation site" description="O-linked (GalNAc...) serine" evidence="1">
    <location>
        <position position="164"/>
    </location>
</feature>
<feature type="disulfide bond" evidence="1">
    <location>
        <begin position="71"/>
        <end position="88"/>
    </location>
</feature>
<feature type="disulfide bond" evidence="1">
    <location>
        <begin position="97"/>
        <end position="130"/>
    </location>
</feature>
<feature type="disulfide bond" evidence="1">
    <location>
        <begin position="106"/>
        <end position="142"/>
    </location>
</feature>
<feature type="disulfide bond" evidence="1">
    <location>
        <begin position="201"/>
        <end position="238"/>
    </location>
</feature>
<feature type="disulfide bond" evidence="1">
    <location>
        <begin position="218"/>
        <end position="226"/>
    </location>
</feature>
<reference key="1">
    <citation type="journal article" date="2000" name="Growth Factors">
        <title>Tissue distribution and retinoid-mediated downregulation of an FGF-binding protein (FGF-BP) in the rat.</title>
        <authorList>
            <person name="Aigner A."/>
            <person name="Malerczyk C."/>
            <person name="Houghtling R."/>
            <person name="Wellstein A."/>
        </authorList>
    </citation>
    <scope>NUCLEOTIDE SEQUENCE [MRNA]</scope>
    <scope>TISSUE SPECIFICITY</scope>
    <scope>INDUCTION</scope>
    <source>
        <strain>Sprague-Dawley</strain>
        <tissue>Skin</tissue>
    </source>
</reference>